<protein>
    <recommendedName>
        <fullName>GTP cyclohydrolase MptA</fullName>
        <ecNumber>3.5.4.39</ecNumber>
    </recommendedName>
    <alternativeName>
        <fullName>GTP cyclohydrolase IV</fullName>
    </alternativeName>
</protein>
<reference key="1">
    <citation type="journal article" date="1996" name="Science">
        <title>Complete genome sequence of the methanogenic archaeon, Methanococcus jannaschii.</title>
        <authorList>
            <person name="Bult C.J."/>
            <person name="White O."/>
            <person name="Olsen G.J."/>
            <person name="Zhou L."/>
            <person name="Fleischmann R.D."/>
            <person name="Sutton G.G."/>
            <person name="Blake J.A."/>
            <person name="FitzGerald L.M."/>
            <person name="Clayton R.A."/>
            <person name="Gocayne J.D."/>
            <person name="Kerlavage A.R."/>
            <person name="Dougherty B.A."/>
            <person name="Tomb J.-F."/>
            <person name="Adams M.D."/>
            <person name="Reich C.I."/>
            <person name="Overbeek R."/>
            <person name="Kirkness E.F."/>
            <person name="Weinstock K.G."/>
            <person name="Merrick J.M."/>
            <person name="Glodek A."/>
            <person name="Scott J.L."/>
            <person name="Geoghagen N.S.M."/>
            <person name="Weidman J.F."/>
            <person name="Fuhrmann J.L."/>
            <person name="Nguyen D."/>
            <person name="Utterback T.R."/>
            <person name="Kelley J.M."/>
            <person name="Peterson J.D."/>
            <person name="Sadow P.W."/>
            <person name="Hanna M.C."/>
            <person name="Cotton M.D."/>
            <person name="Roberts K.M."/>
            <person name="Hurst M.A."/>
            <person name="Kaine B.P."/>
            <person name="Borodovsky M."/>
            <person name="Klenk H.-P."/>
            <person name="Fraser C.M."/>
            <person name="Smith H.O."/>
            <person name="Woese C.R."/>
            <person name="Venter J.C."/>
        </authorList>
    </citation>
    <scope>NUCLEOTIDE SEQUENCE [LARGE SCALE GENOMIC DNA]</scope>
    <source>
        <strain>ATCC 43067 / DSM 2661 / JAL-1 / JCM 10045 / NBRC 100440</strain>
    </source>
</reference>
<reference key="2">
    <citation type="journal article" date="2007" name="Biochemistry">
        <title>Characterization of an Fe(2+)-dependent archaeal-specific GTP cyclohydrolase, MptA, from Methanocaldococcus jannaschii.</title>
        <authorList>
            <person name="Grochowski L.L."/>
            <person name="Xu H."/>
            <person name="Leung K."/>
            <person name="White R.H."/>
        </authorList>
    </citation>
    <scope>FUNCTION</scope>
    <scope>CATALYTIC ACTIVITY</scope>
    <scope>SUBUNIT</scope>
    <scope>COFACTOR</scope>
    <scope>SUBSTRATE SPECIFICITY</scope>
    <scope>ACTIVITY REGULATION</scope>
    <scope>REACTION MECHANISM</scope>
    <scope>MUTAGENESIS OF GLU-47; HIS-98; HIS-197; HIS-290 AND HIS-292</scope>
    <scope>BIOPHYSICOCHEMICAL PROPERTIES</scope>
</reference>
<feature type="chain" id="PRO_0000147743" description="GTP cyclohydrolase MptA">
    <location>
        <begin position="1"/>
        <end position="313"/>
    </location>
</feature>
<feature type="site" description="May be catalytically important">
    <location>
        <position position="160"/>
    </location>
</feature>
<feature type="mutagenesis site" description="Unchanged." evidence="1">
    <original>E</original>
    <variation>D</variation>
    <location>
        <position position="47"/>
    </location>
</feature>
<feature type="mutagenesis site" description="Unchanged." evidence="1">
    <original>H</original>
    <variation>N</variation>
    <location>
        <position position="98"/>
    </location>
</feature>
<feature type="mutagenesis site" description="Strong decrease in specific activity." evidence="1">
    <original>H</original>
    <variation>N</variation>
    <location>
        <position position="197"/>
    </location>
</feature>
<feature type="mutagenesis site" description="Strong decrease in specific activity." evidence="1">
    <original>H</original>
    <variation>N</variation>
    <location>
        <position position="290"/>
    </location>
</feature>
<feature type="mutagenesis site" description="Strong decrease in specific activity." evidence="1">
    <original>H</original>
    <variation>N</variation>
    <location>
        <position position="292"/>
    </location>
</feature>
<comment type="function">
    <text evidence="1">Converts GTP to 7,8-dihydro-D-neopterin 2',3'-cyclic phosphate, the first intermediate in the biosynthesis of coenzyme methanopterin. It is also able to utilize a variety of GTP analogs as substrates, including GDP, beta,gamma-methylene-GTP and GTP-[gamma-thio].</text>
</comment>
<comment type="catalytic activity">
    <reaction evidence="1">
        <text>GTP + H2O = 7,8-dihydroneopterin 2',3'-cyclic phosphate + formate + diphosphate + H(+)</text>
        <dbReference type="Rhea" id="RHEA:25860"/>
        <dbReference type="ChEBI" id="CHEBI:15377"/>
        <dbReference type="ChEBI" id="CHEBI:15378"/>
        <dbReference type="ChEBI" id="CHEBI:15740"/>
        <dbReference type="ChEBI" id="CHEBI:33019"/>
        <dbReference type="ChEBI" id="CHEBI:37565"/>
        <dbReference type="ChEBI" id="CHEBI:58854"/>
        <dbReference type="EC" id="3.5.4.39"/>
    </reaction>
</comment>
<comment type="cofactor">
    <cofactor evidence="1">
        <name>Fe(2+)</name>
        <dbReference type="ChEBI" id="CHEBI:29033"/>
    </cofactor>
    <text evidence="1">Binds 1 Fe(2+) ion per subunit. Mn(2+) and Zn(2+) can be used to a lesser extent, but not at a relevant physiological concentration.</text>
</comment>
<comment type="activity regulation">
    <text evidence="1">Inhibited by GTP concentrations greater than 0.3 mM and by 2-amino-5-formylamino-6-ribofuranosylamino-4(3H)-pyrimidinone 5'-phosphate (fapyGMP). Partial inhibition is observed when 2 mM GMP, dGTP, or 7-methyl-GTP was included along with 2 mM GTP.</text>
</comment>
<comment type="biophysicochemical properties">
    <kinetics>
        <Vmax evidence="1">13.0 nmol/min/mg enzyme with GDP as substrate (at pH 7.2)</Vmax>
        <Vmax evidence="1">30.0 nmol/min/mg enzyme with GTP as substrate (at pH 7.2)</Vmax>
        <Vmax evidence="1">39.0 nmol/min/mg enzyme with GTP-[gamma-thio] as substrate (at pH 7.2)</Vmax>
        <Vmax evidence="1">3.0 nmol/min/mg enzyme with beta,gamma-methylene-GTP as substrate (at pH 7.2)</Vmax>
        <text>Other purine nucleotides including ATP, ITP, dGTP, GMP, and 7-methyl-GTP do not serve as substrates.</text>
    </kinetics>
    <phDependence>
        <text evidence="1">Optimum pH is 6.5.</text>
    </phDependence>
    <temperatureDependence>
        <text evidence="1">MptA loses 27% activity when it incubates for 10 minutes at 80 degrees Celsius, 60% activity at 90 degrees Celsius, and 89% activity at 100 degrees Celsius.</text>
    </temperatureDependence>
</comment>
<comment type="pathway">
    <text>Cofactor biosynthesis; 5,6,7,8-tetrahydromethanopterin biosynthesis.</text>
</comment>
<comment type="subunit">
    <text evidence="1">Homodimer.</text>
</comment>
<comment type="miscellaneous">
    <text>MptA is the archetype of a new class of GTP cyclohydrolases that catalyzes a series of reactions most similar to that seen with GTPCHI but unique in that the cyclic phosphate is the product.</text>
</comment>
<comment type="similarity">
    <text evidence="2">Belongs to the GTP cyclohydrolase IV family.</text>
</comment>
<comment type="sequence caution" evidence="2">
    <conflict type="erroneous initiation">
        <sequence resource="EMBL-CDS" id="AAB98765"/>
    </conflict>
</comment>
<proteinExistence type="evidence at protein level"/>
<organism>
    <name type="scientific">Methanocaldococcus jannaschii (strain ATCC 43067 / DSM 2661 / JAL-1 / JCM 10045 / NBRC 100440)</name>
    <name type="common">Methanococcus jannaschii</name>
    <dbReference type="NCBI Taxonomy" id="243232"/>
    <lineage>
        <taxon>Archaea</taxon>
        <taxon>Methanobacteriati</taxon>
        <taxon>Methanobacteriota</taxon>
        <taxon>Methanomada group</taxon>
        <taxon>Methanococci</taxon>
        <taxon>Methanococcales</taxon>
        <taxon>Methanocaldococcaceae</taxon>
        <taxon>Methanocaldococcus</taxon>
    </lineage>
</organism>
<gene>
    <name type="primary">mptA</name>
    <name type="ordered locus">MJ0775</name>
</gene>
<dbReference type="EC" id="3.5.4.39"/>
<dbReference type="EMBL" id="L77117">
    <property type="protein sequence ID" value="AAB98765.1"/>
    <property type="status" value="ALT_INIT"/>
    <property type="molecule type" value="Genomic_DNA"/>
</dbReference>
<dbReference type="PIR" id="G64396">
    <property type="entry name" value="G64396"/>
</dbReference>
<dbReference type="RefSeq" id="WP_064496622.1">
    <property type="nucleotide sequence ID" value="NC_000909.1"/>
</dbReference>
<dbReference type="SMR" id="Q58185"/>
<dbReference type="FunCoup" id="Q58185">
    <property type="interactions" value="1"/>
</dbReference>
<dbReference type="STRING" id="243232.MJ_0775"/>
<dbReference type="PaxDb" id="243232-MJ_0775"/>
<dbReference type="DNASU" id="1451652"/>
<dbReference type="EnsemblBacteria" id="AAB98765">
    <property type="protein sequence ID" value="AAB98765"/>
    <property type="gene ID" value="MJ_0775"/>
</dbReference>
<dbReference type="GeneID" id="1451652"/>
<dbReference type="KEGG" id="mja:MJ_0775"/>
<dbReference type="eggNOG" id="arCOG04301">
    <property type="taxonomic scope" value="Archaea"/>
</dbReference>
<dbReference type="HOGENOM" id="CLU_062816_1_0_2"/>
<dbReference type="InParanoid" id="Q58185"/>
<dbReference type="OrthoDB" id="53087at2157"/>
<dbReference type="PhylomeDB" id="Q58185"/>
<dbReference type="BioCyc" id="MetaCyc:MONOMER-14599"/>
<dbReference type="BRENDA" id="3.5.4.39">
    <property type="organism ID" value="3260"/>
</dbReference>
<dbReference type="UniPathway" id="UPA00065"/>
<dbReference type="Proteomes" id="UP000000805">
    <property type="component" value="Chromosome"/>
</dbReference>
<dbReference type="GO" id="GO:0008198">
    <property type="term" value="F:ferrous iron binding"/>
    <property type="evidence" value="ECO:0000314"/>
    <property type="project" value="UniProtKB"/>
</dbReference>
<dbReference type="GO" id="GO:0003933">
    <property type="term" value="F:GTP cyclohydrolase activity"/>
    <property type="evidence" value="ECO:0000318"/>
    <property type="project" value="GO_Central"/>
</dbReference>
<dbReference type="GO" id="GO:0003934">
    <property type="term" value="F:GTP cyclohydrolase I activity"/>
    <property type="evidence" value="ECO:0007669"/>
    <property type="project" value="InterPro"/>
</dbReference>
<dbReference type="GO" id="GO:0044682">
    <property type="term" value="F:GTP cyclohydrolase IV activity"/>
    <property type="evidence" value="ECO:0000314"/>
    <property type="project" value="MENGO"/>
</dbReference>
<dbReference type="GO" id="GO:0042802">
    <property type="term" value="F:identical protein binding"/>
    <property type="evidence" value="ECO:0000314"/>
    <property type="project" value="UniProtKB"/>
</dbReference>
<dbReference type="GO" id="GO:0042803">
    <property type="term" value="F:protein homodimerization activity"/>
    <property type="evidence" value="ECO:0000314"/>
    <property type="project" value="UniProtKB"/>
</dbReference>
<dbReference type="GO" id="GO:2001116">
    <property type="term" value="P:methanopterin-containing compound biosynthetic process"/>
    <property type="evidence" value="ECO:0000314"/>
    <property type="project" value="UniProtKB"/>
</dbReference>
<dbReference type="GO" id="GO:2001118">
    <property type="term" value="P:tetrahydromethanopterin biosynthetic process"/>
    <property type="evidence" value="ECO:0007669"/>
    <property type="project" value="UniProtKB-UniRule"/>
</dbReference>
<dbReference type="Gene3D" id="3.10.270.10">
    <property type="entry name" value="Urate Oxidase"/>
    <property type="match status" value="1"/>
</dbReference>
<dbReference type="HAMAP" id="MF_01527_A">
    <property type="entry name" value="GTP_cyclohydrol_A"/>
    <property type="match status" value="1"/>
</dbReference>
<dbReference type="InterPro" id="IPR003801">
    <property type="entry name" value="GTP_cyclohydrolase_FolE2/MptA"/>
</dbReference>
<dbReference type="InterPro" id="IPR022840">
    <property type="entry name" value="GTP_cyclohydrolase_MptA"/>
</dbReference>
<dbReference type="NCBIfam" id="TIGR00294">
    <property type="entry name" value="GTP cyclohydrolase MptA"/>
    <property type="match status" value="1"/>
</dbReference>
<dbReference type="PANTHER" id="PTHR36445">
    <property type="entry name" value="GTP CYCLOHYDROLASE MPTA"/>
    <property type="match status" value="1"/>
</dbReference>
<dbReference type="PANTHER" id="PTHR36445:SF1">
    <property type="entry name" value="GTP CYCLOHYDROLASE MPTA"/>
    <property type="match status" value="1"/>
</dbReference>
<dbReference type="Pfam" id="PF02649">
    <property type="entry name" value="GCHY-1"/>
    <property type="match status" value="1"/>
</dbReference>
<keyword id="KW-0378">Hydrolase</keyword>
<keyword id="KW-0408">Iron</keyword>
<keyword id="KW-0464">Manganese</keyword>
<keyword id="KW-0479">Metal-binding</keyword>
<keyword id="KW-1185">Reference proteome</keyword>
<keyword id="KW-0862">Zinc</keyword>
<name>MPTA_METJA</name>
<sequence>MNWRCDVQNFEPDVKISLTRVGVTNLKKLVRLKRTNKRPIILLSTFEVFVNLPSSQKGIHMSRNPEVIEGIIDEALELESYEMETICEEIVKRLFEKHEYATEAEVFMVSDFMTKEKSPISGKYSQEIHKIMGGAKGIKKDDEIELTKIVGAEVVGITACPCAQNLIKEICIKNLKEKGFSDEDIDKILDSVIFATHNQRGIGRIILEVPTGYDIEIMDIIEIIKKSMSAEIHGILKRADEAYVVEQSHKNPKFVEDCVREMAKRVVEKFKHLPDETKVLIRQINMESIHRHDAFAEKVATLGELRRELLSYE</sequence>
<evidence type="ECO:0000269" key="1">
    <source>
    </source>
</evidence>
<evidence type="ECO:0000305" key="2"/>
<accession>Q58185</accession>